<feature type="chain" id="PRO_0000269555" description="Solute carrier family 35 member G5">
    <location>
        <begin position="1"/>
        <end position="338"/>
    </location>
</feature>
<feature type="transmembrane region" description="Helical" evidence="1">
    <location>
        <begin position="37"/>
        <end position="57"/>
    </location>
</feature>
<feature type="transmembrane region" description="Helical" evidence="1">
    <location>
        <begin position="67"/>
        <end position="87"/>
    </location>
</feature>
<feature type="transmembrane region" description="Helical" evidence="1">
    <location>
        <begin position="105"/>
        <end position="125"/>
    </location>
</feature>
<feature type="transmembrane region" description="Helical" evidence="1">
    <location>
        <begin position="160"/>
        <end position="180"/>
    </location>
</feature>
<feature type="transmembrane region" description="Helical" evidence="1">
    <location>
        <begin position="190"/>
        <end position="210"/>
    </location>
</feature>
<feature type="transmembrane region" description="Helical" evidence="1">
    <location>
        <begin position="221"/>
        <end position="241"/>
    </location>
</feature>
<feature type="transmembrane region" description="Helical" evidence="1">
    <location>
        <begin position="250"/>
        <end position="270"/>
    </location>
</feature>
<feature type="transmembrane region" description="Helical" evidence="1">
    <location>
        <begin position="281"/>
        <end position="301"/>
    </location>
</feature>
<feature type="transmembrane region" description="Helical" evidence="1">
    <location>
        <begin position="310"/>
        <end position="330"/>
    </location>
</feature>
<feature type="domain" description="EamA 1">
    <location>
        <begin position="49"/>
        <end position="174"/>
    </location>
</feature>
<feature type="domain" description="EamA 2">
    <location>
        <begin position="272"/>
        <end position="325"/>
    </location>
</feature>
<feature type="region of interest" description="Disordered" evidence="2">
    <location>
        <begin position="1"/>
        <end position="28"/>
    </location>
</feature>
<name>S35G5_GORGO</name>
<organism>
    <name type="scientific">Gorilla gorilla gorilla</name>
    <name type="common">Western lowland gorilla</name>
    <dbReference type="NCBI Taxonomy" id="9595"/>
    <lineage>
        <taxon>Eukaryota</taxon>
        <taxon>Metazoa</taxon>
        <taxon>Chordata</taxon>
        <taxon>Craniata</taxon>
        <taxon>Vertebrata</taxon>
        <taxon>Euteleostomi</taxon>
        <taxon>Mammalia</taxon>
        <taxon>Eutheria</taxon>
        <taxon>Euarchontoglires</taxon>
        <taxon>Primates</taxon>
        <taxon>Haplorrhini</taxon>
        <taxon>Catarrhini</taxon>
        <taxon>Hominidae</taxon>
        <taxon>Gorilla</taxon>
    </lineage>
</organism>
<evidence type="ECO:0000255" key="1"/>
<evidence type="ECO:0000256" key="2">
    <source>
        <dbReference type="SAM" id="MobiDB-lite"/>
    </source>
</evidence>
<evidence type="ECO:0000305" key="3"/>
<sequence length="338" mass="35190">MAGSHPYFNLPDSTHPSPPSGPPSLRWHQRCQPSDATNGLLVALLGGGLPAGFVGPLSRMAYQASNLPSLELLICRCLFHLPIALLLKLCGDPLLGPPDIRGRACFCALLNVLSIGCAYSAVQVVPTGNAATVLKGSSTVCSAVLTLCLESQGLSGYDWCGLLGSILGLIIIVGPGLWTLQEGTMGVYTALGYVQAFLGGLALSLGLLVYRSLHFPSFLPTVAFLSGLVGLLGSVPGLFVLHTPVLPSDLLSWSCVGAVGILTLVSFTCVGYAVTKAHPALVCAVLHSEVVVALILQYYMLPETVAPSDIMGAGVVLGNITIIPAWNLSCERTGKVEE</sequence>
<proteinExistence type="inferred from homology"/>
<keyword id="KW-0472">Membrane</keyword>
<keyword id="KW-1185">Reference proteome</keyword>
<keyword id="KW-0677">Repeat</keyword>
<keyword id="KW-0812">Transmembrane</keyword>
<keyword id="KW-1133">Transmembrane helix</keyword>
<gene>
    <name type="primary">SLC35G5</name>
    <name type="synonym">AMAC1L2</name>
</gene>
<protein>
    <recommendedName>
        <fullName>Solute carrier family 35 member G5</fullName>
    </recommendedName>
    <alternativeName>
        <fullName>Acyl-malonyl-condensing enzyme 1-like protein 2</fullName>
    </alternativeName>
</protein>
<accession>Q0Q7U7</accession>
<reference key="1">
    <citation type="journal article" date="2006" name="Proc. Natl. Acad. Sci. U.S.A.">
        <title>Emergence of primate genes by retrotransposon-mediated sequence transduction.</title>
        <authorList>
            <person name="Xing J."/>
            <person name="Wang H."/>
            <person name="Belancio V.P."/>
            <person name="Cordaux R."/>
            <person name="Deininger P.L."/>
            <person name="Batzer M.A."/>
        </authorList>
    </citation>
    <scope>NUCLEOTIDE SEQUENCE [GENOMIC DNA]</scope>
</reference>
<comment type="subcellular location">
    <subcellularLocation>
        <location evidence="3">Membrane</location>
        <topology evidence="3">Multi-pass membrane protein</topology>
    </subcellularLocation>
</comment>
<comment type="miscellaneous">
    <text>The gene encoding this protein appears to have arisen by SVA-mediated retrotransposition of the SLC35G6 gene in the primate lineage.</text>
</comment>
<comment type="similarity">
    <text evidence="3">Belongs to the SLC35G solute transporter family.</text>
</comment>
<dbReference type="EMBL" id="DQ482914">
    <property type="protein sequence ID" value="ABE68917.1"/>
    <property type="molecule type" value="Genomic_DNA"/>
</dbReference>
<dbReference type="SMR" id="Q0Q7U7"/>
<dbReference type="eggNOG" id="ENOG502RCFC">
    <property type="taxonomic scope" value="Eukaryota"/>
</dbReference>
<dbReference type="InParanoid" id="Q0Q7U7"/>
<dbReference type="Proteomes" id="UP000001519">
    <property type="component" value="Unplaced"/>
</dbReference>
<dbReference type="GO" id="GO:0016020">
    <property type="term" value="C:membrane"/>
    <property type="evidence" value="ECO:0000318"/>
    <property type="project" value="GO_Central"/>
</dbReference>
<dbReference type="InterPro" id="IPR000620">
    <property type="entry name" value="EamA_dom"/>
</dbReference>
<dbReference type="PANTHER" id="PTHR22911">
    <property type="entry name" value="ACYL-MALONYL CONDENSING ENZYME-RELATED"/>
    <property type="match status" value="1"/>
</dbReference>
<dbReference type="PANTHER" id="PTHR22911:SF32">
    <property type="entry name" value="SOLUTE CARRIER FAMILY 35 MEMBER G5-RELATED"/>
    <property type="match status" value="1"/>
</dbReference>
<dbReference type="Pfam" id="PF00892">
    <property type="entry name" value="EamA"/>
    <property type="match status" value="2"/>
</dbReference>
<dbReference type="SUPFAM" id="SSF103481">
    <property type="entry name" value="Multidrug resistance efflux transporter EmrE"/>
    <property type="match status" value="2"/>
</dbReference>